<accession>B5FNS6</accession>
<protein>
    <recommendedName>
        <fullName evidence="1">Anaerobic glycerol-3-phosphate dehydrogenase subunit B</fullName>
        <shortName evidence="1">Anaerobic G-3-P dehydrogenase subunit B</shortName>
        <shortName evidence="1">Anaerobic G3Pdhase B</shortName>
        <ecNumber evidence="1">1.1.5.3</ecNumber>
    </recommendedName>
</protein>
<proteinExistence type="inferred from homology"/>
<gene>
    <name evidence="1" type="primary">glpB</name>
    <name type="ordered locus">SeD_A2629</name>
</gene>
<keyword id="KW-0285">Flavoprotein</keyword>
<keyword id="KW-0288">FMN</keyword>
<keyword id="KW-0560">Oxidoreductase</keyword>
<reference key="1">
    <citation type="journal article" date="2011" name="J. Bacteriol.">
        <title>Comparative genomics of 28 Salmonella enterica isolates: evidence for CRISPR-mediated adaptive sublineage evolution.</title>
        <authorList>
            <person name="Fricke W.F."/>
            <person name="Mammel M.K."/>
            <person name="McDermott P.F."/>
            <person name="Tartera C."/>
            <person name="White D.G."/>
            <person name="Leclerc J.E."/>
            <person name="Ravel J."/>
            <person name="Cebula T.A."/>
        </authorList>
    </citation>
    <scope>NUCLEOTIDE SEQUENCE [LARGE SCALE GENOMIC DNA]</scope>
    <source>
        <strain>CT_02021853</strain>
    </source>
</reference>
<comment type="function">
    <text evidence="1">Conversion of glycerol 3-phosphate to dihydroxyacetone. Uses fumarate or nitrate as electron acceptor.</text>
</comment>
<comment type="catalytic activity">
    <reaction evidence="1">
        <text>a quinone + sn-glycerol 3-phosphate = dihydroxyacetone phosphate + a quinol</text>
        <dbReference type="Rhea" id="RHEA:18977"/>
        <dbReference type="ChEBI" id="CHEBI:24646"/>
        <dbReference type="ChEBI" id="CHEBI:57597"/>
        <dbReference type="ChEBI" id="CHEBI:57642"/>
        <dbReference type="ChEBI" id="CHEBI:132124"/>
        <dbReference type="EC" id="1.1.5.3"/>
    </reaction>
</comment>
<comment type="cofactor">
    <cofactor evidence="1">
        <name>FMN</name>
        <dbReference type="ChEBI" id="CHEBI:58210"/>
    </cofactor>
</comment>
<comment type="pathway">
    <text evidence="1">Polyol metabolism; glycerol degradation via glycerol kinase pathway; glycerone phosphate from sn-glycerol 3-phosphate (anaerobic route): step 1/1.</text>
</comment>
<comment type="subunit">
    <text evidence="1">Composed of a catalytic GlpA/B dimer and of membrane bound GlpC.</text>
</comment>
<comment type="similarity">
    <text evidence="1">Belongs to the anaerobic G-3-P dehydrogenase subunit B family.</text>
</comment>
<organism>
    <name type="scientific">Salmonella dublin (strain CT_02021853)</name>
    <dbReference type="NCBI Taxonomy" id="439851"/>
    <lineage>
        <taxon>Bacteria</taxon>
        <taxon>Pseudomonadati</taxon>
        <taxon>Pseudomonadota</taxon>
        <taxon>Gammaproteobacteria</taxon>
        <taxon>Enterobacterales</taxon>
        <taxon>Enterobacteriaceae</taxon>
        <taxon>Salmonella</taxon>
    </lineage>
</organism>
<evidence type="ECO:0000255" key="1">
    <source>
        <dbReference type="HAMAP-Rule" id="MF_00753"/>
    </source>
</evidence>
<dbReference type="EC" id="1.1.5.3" evidence="1"/>
<dbReference type="EMBL" id="CP001144">
    <property type="protein sequence ID" value="ACH73621.1"/>
    <property type="molecule type" value="Genomic_DNA"/>
</dbReference>
<dbReference type="RefSeq" id="WP_000667149.1">
    <property type="nucleotide sequence ID" value="NC_011205.1"/>
</dbReference>
<dbReference type="KEGG" id="sed:SeD_A2629"/>
<dbReference type="HOGENOM" id="CLU_047793_0_0_6"/>
<dbReference type="UniPathway" id="UPA00618">
    <property type="reaction ID" value="UER00673"/>
</dbReference>
<dbReference type="Proteomes" id="UP000008322">
    <property type="component" value="Chromosome"/>
</dbReference>
<dbReference type="GO" id="GO:0009331">
    <property type="term" value="C:glycerol-3-phosphate dehydrogenase (FAD) complex"/>
    <property type="evidence" value="ECO:0007669"/>
    <property type="project" value="InterPro"/>
</dbReference>
<dbReference type="GO" id="GO:0004368">
    <property type="term" value="F:glycerol-3-phosphate dehydrogenase (quinone) activity"/>
    <property type="evidence" value="ECO:0007669"/>
    <property type="project" value="UniProtKB-UniRule"/>
</dbReference>
<dbReference type="GO" id="GO:0019563">
    <property type="term" value="P:glycerol catabolic process"/>
    <property type="evidence" value="ECO:0007669"/>
    <property type="project" value="UniProtKB-UniRule"/>
</dbReference>
<dbReference type="Gene3D" id="3.50.50.60">
    <property type="entry name" value="FAD/NAD(P)-binding domain"/>
    <property type="match status" value="1"/>
</dbReference>
<dbReference type="HAMAP" id="MF_00753">
    <property type="entry name" value="Glycerol3P_GlpB"/>
    <property type="match status" value="1"/>
</dbReference>
<dbReference type="InterPro" id="IPR003953">
    <property type="entry name" value="FAD-dep_OxRdtase_2_FAD-bd"/>
</dbReference>
<dbReference type="InterPro" id="IPR036188">
    <property type="entry name" value="FAD/NAD-bd_sf"/>
</dbReference>
<dbReference type="InterPro" id="IPR009158">
    <property type="entry name" value="G3P_DH_GlpB_su"/>
</dbReference>
<dbReference type="NCBIfam" id="TIGR03378">
    <property type="entry name" value="glycerol3P_GlpB"/>
    <property type="match status" value="1"/>
</dbReference>
<dbReference type="NCBIfam" id="NF003718">
    <property type="entry name" value="PRK05329.1-1"/>
    <property type="match status" value="1"/>
</dbReference>
<dbReference type="NCBIfam" id="NF003719">
    <property type="entry name" value="PRK05329.1-2"/>
    <property type="match status" value="1"/>
</dbReference>
<dbReference type="NCBIfam" id="NF003720">
    <property type="entry name" value="PRK05329.1-3"/>
    <property type="match status" value="1"/>
</dbReference>
<dbReference type="NCBIfam" id="NF003721">
    <property type="entry name" value="PRK05329.1-4"/>
    <property type="match status" value="1"/>
</dbReference>
<dbReference type="Pfam" id="PF00890">
    <property type="entry name" value="FAD_binding_2"/>
    <property type="match status" value="1"/>
</dbReference>
<dbReference type="PIRSF" id="PIRSF000141">
    <property type="entry name" value="Anaerobic_G3P_dh"/>
    <property type="match status" value="1"/>
</dbReference>
<dbReference type="SUPFAM" id="SSF51905">
    <property type="entry name" value="FAD/NAD(P)-binding domain"/>
    <property type="match status" value="1"/>
</dbReference>
<name>GLPB_SALDC</name>
<feature type="chain" id="PRO_1000133368" description="Anaerobic glycerol-3-phosphate dehydrogenase subunit B">
    <location>
        <begin position="1"/>
        <end position="419"/>
    </location>
</feature>
<sequence length="419" mass="45717">MKFDTVIMGGGLAGLLCGLQLQQHGLRCAIVTRGQSALHFSSGSLDLLSALPDGQPVTDITAGLDALRRQAPEHPYSRLGAQKVLTLAQQAQTLLNASGAQLYGDVQQAHQRVTPLGTLRSTWLSSPEVPVWPLSAQRICVVGVSGLLDFQAHLAAASLRQRDLNVETAEIDLPELDVLRDNPTEFRAVNIARLLDNEEKWPLLYDALSPIATNCDMIIMPACFGLANDTLWRWLNERLPCALTLLPTLPPSVLGIRLHNQLQRQFVRQGGIWMPGDEVKKVTCRHGIVSEIWTRNHADIPLRPRFAVLASGSFFSSGLVAEREGIREPILGLDVQQTATRAEWYQQHFFDPQPWQQFGVVTDDAFRPSLAGNTVENLYAIGSVLAGFDPIAEGCGGGVCAVSALQAAHHIAERAGEQQ</sequence>